<comment type="function">
    <text evidence="1">Required for the import and folding of small cysteine-containing proteins (small Tim) in the mitochondrial intermembrane space (IMS). Forms a redox cycle with ERV1 that involves a disulfide relay system. Precursor proteins to be imported into the IMS are translocated in their reduced form into the mitochondria. The oxidized form of MIA40 forms a transient intermolecular disulfide bridge with the reduced precursor protein, resulting in oxidation of the precursor protein that now contains an intramolecular disulfide bond and is able to undergo folding in the IMS (By similarity).</text>
</comment>
<comment type="cofactor">
    <cofactor evidence="1">
        <name>Cu(2+)</name>
        <dbReference type="ChEBI" id="CHEBI:29036"/>
    </cofactor>
    <cofactor evidence="1">
        <name>Zn(2+)</name>
        <dbReference type="ChEBI" id="CHEBI:29105"/>
    </cofactor>
    <text evidence="1">Cu(2+) or Zn(2+).</text>
</comment>
<comment type="subunit">
    <text evidence="1">Monomer.</text>
</comment>
<comment type="subcellular location">
    <subcellularLocation>
        <location evidence="1">Mitochondrion inner membrane</location>
        <topology evidence="1">Single-pass type II membrane protein</topology>
        <orientation evidence="1">Intermembrane side</orientation>
    </subcellularLocation>
</comment>
<comment type="domain">
    <text evidence="1">The CHCH domain contains a conserved twin Cys-X(9)-Cys motif which is required for import and stability of MIA40 in mitochondria.</text>
</comment>
<comment type="sequence caution" evidence="5">
    <conflict type="erroneous gene model prediction">
        <sequence resource="EMBL-CDS" id="EAL20510"/>
    </conflict>
</comment>
<proteinExistence type="inferred from homology"/>
<reference key="1">
    <citation type="journal article" date="2005" name="Science">
        <title>The genome of the basidiomycetous yeast and human pathogen Cryptococcus neoformans.</title>
        <authorList>
            <person name="Loftus B.J."/>
            <person name="Fung E."/>
            <person name="Roncaglia P."/>
            <person name="Rowley D."/>
            <person name="Amedeo P."/>
            <person name="Bruno D."/>
            <person name="Vamathevan J."/>
            <person name="Miranda M."/>
            <person name="Anderson I.J."/>
            <person name="Fraser J.A."/>
            <person name="Allen J.E."/>
            <person name="Bosdet I.E."/>
            <person name="Brent M.R."/>
            <person name="Chiu R."/>
            <person name="Doering T.L."/>
            <person name="Donlin M.J."/>
            <person name="D'Souza C.A."/>
            <person name="Fox D.S."/>
            <person name="Grinberg V."/>
            <person name="Fu J."/>
            <person name="Fukushima M."/>
            <person name="Haas B.J."/>
            <person name="Huang J.C."/>
            <person name="Janbon G."/>
            <person name="Jones S.J.M."/>
            <person name="Koo H.L."/>
            <person name="Krzywinski M.I."/>
            <person name="Kwon-Chung K.J."/>
            <person name="Lengeler K.B."/>
            <person name="Maiti R."/>
            <person name="Marra M.A."/>
            <person name="Marra R.E."/>
            <person name="Mathewson C.A."/>
            <person name="Mitchell T.G."/>
            <person name="Pertea M."/>
            <person name="Riggs F.R."/>
            <person name="Salzberg S.L."/>
            <person name="Schein J.E."/>
            <person name="Shvartsbeyn A."/>
            <person name="Shin H."/>
            <person name="Shumway M."/>
            <person name="Specht C.A."/>
            <person name="Suh B.B."/>
            <person name="Tenney A."/>
            <person name="Utterback T.R."/>
            <person name="Wickes B.L."/>
            <person name="Wortman J.R."/>
            <person name="Wye N.H."/>
            <person name="Kronstad J.W."/>
            <person name="Lodge J.K."/>
            <person name="Heitman J."/>
            <person name="Davis R.W."/>
            <person name="Fraser C.M."/>
            <person name="Hyman R.W."/>
        </authorList>
    </citation>
    <scope>NUCLEOTIDE SEQUENCE [LARGE SCALE GENOMIC DNA]</scope>
    <source>
        <strain>B-3501A</strain>
    </source>
</reference>
<keyword id="KW-1015">Disulfide bond</keyword>
<keyword id="KW-0472">Membrane</keyword>
<keyword id="KW-0496">Mitochondrion</keyword>
<keyword id="KW-0999">Mitochondrion inner membrane</keyword>
<keyword id="KW-0560">Oxidoreductase</keyword>
<keyword id="KW-0653">Protein transport</keyword>
<keyword id="KW-0676">Redox-active center</keyword>
<keyword id="KW-0735">Signal-anchor</keyword>
<keyword id="KW-0809">Transit peptide</keyword>
<keyword id="KW-0811">Translocation</keyword>
<keyword id="KW-0812">Transmembrane</keyword>
<keyword id="KW-1133">Transmembrane helix</keyword>
<keyword id="KW-0813">Transport</keyword>
<sequence>MFARSFSNASRTIARRSLSTRSGPAPSSLWSSRNAVIAGTTLAITALAVTSERRKVFNESAQKATSPRDSIIAQDSLKENVHKKSVRQDEFSGESTKPEASTSSDSVEKAADDAAQILEEKEAEASEPSQGAYNPETGEINWDCPCLGGMATGPCGEQFKAAFSCFVYSEAEPKGVDCVELFKVMQDCFREHPEIYGEVDTLGLVLMFYAEIDDDEAPPQEGTMEEKVEAAKEETAAPAAAP</sequence>
<feature type="transit peptide" description="Mitochondrion" evidence="2">
    <location>
        <begin position="1"/>
        <end position="18"/>
    </location>
</feature>
<feature type="chain" id="PRO_0000410037" description="Mitochondrial intermembrane space import and assembly protein 40">
    <location>
        <begin position="19"/>
        <end position="242"/>
    </location>
</feature>
<feature type="topological domain" description="Mitochondrial matrix" evidence="2">
    <location>
        <begin position="19"/>
        <end position="34"/>
    </location>
</feature>
<feature type="transmembrane region" description="Helical; Signal-anchor for type II membrane protein" evidence="2">
    <location>
        <begin position="35"/>
        <end position="51"/>
    </location>
</feature>
<feature type="topological domain" description="Mitochondrial intermembrane" evidence="2">
    <location>
        <begin position="52"/>
        <end position="242"/>
    </location>
</feature>
<feature type="domain" description="CHCH" evidence="3">
    <location>
        <begin position="152"/>
        <end position="196"/>
    </location>
</feature>
<feature type="region of interest" description="Disordered" evidence="4">
    <location>
        <begin position="1"/>
        <end position="30"/>
    </location>
</feature>
<feature type="region of interest" description="Disordered" evidence="4">
    <location>
        <begin position="58"/>
        <end position="111"/>
    </location>
</feature>
<feature type="region of interest" description="Disordered" evidence="4">
    <location>
        <begin position="215"/>
        <end position="242"/>
    </location>
</feature>
<feature type="short sequence motif" description="Cx9C motif 1" evidence="3">
    <location>
        <begin position="155"/>
        <end position="165"/>
    </location>
</feature>
<feature type="short sequence motif" description="Cx9C motif 2" evidence="3">
    <location>
        <begin position="178"/>
        <end position="188"/>
    </location>
</feature>
<feature type="compositionally biased region" description="Polar residues" evidence="4">
    <location>
        <begin position="1"/>
        <end position="22"/>
    </location>
</feature>
<feature type="compositionally biased region" description="Polar residues" evidence="4">
    <location>
        <begin position="59"/>
        <end position="68"/>
    </location>
</feature>
<feature type="compositionally biased region" description="Basic and acidic residues" evidence="4">
    <location>
        <begin position="76"/>
        <end position="90"/>
    </location>
</feature>
<feature type="compositionally biased region" description="Polar residues" evidence="4">
    <location>
        <begin position="93"/>
        <end position="105"/>
    </location>
</feature>
<feature type="compositionally biased region" description="Basic and acidic residues" evidence="4">
    <location>
        <begin position="224"/>
        <end position="235"/>
    </location>
</feature>
<feature type="disulfide bond" description="Redox-active" evidence="1">
    <location>
        <begin position="144"/>
        <end position="146"/>
    </location>
</feature>
<feature type="disulfide bond" evidence="3">
    <location>
        <begin position="155"/>
        <end position="188"/>
    </location>
</feature>
<feature type="disulfide bond" evidence="3">
    <location>
        <begin position="165"/>
        <end position="178"/>
    </location>
</feature>
<accession>P0CM69</accession>
<accession>Q55RV1</accession>
<accession>Q5KGA4</accession>
<name>MIA40_CRYNB</name>
<gene>
    <name type="primary">MIA40</name>
    <name type="synonym">TIM40</name>
    <name type="ordered locus">CNBE4300</name>
</gene>
<protein>
    <recommendedName>
        <fullName>Mitochondrial intermembrane space import and assembly protein 40</fullName>
    </recommendedName>
    <alternativeName>
        <fullName>Mitochondrial import inner membrane translocase TIM40</fullName>
    </alternativeName>
</protein>
<organism>
    <name type="scientific">Cryptococcus neoformans var. neoformans serotype D (strain B-3501A)</name>
    <name type="common">Filobasidiella neoformans</name>
    <dbReference type="NCBI Taxonomy" id="283643"/>
    <lineage>
        <taxon>Eukaryota</taxon>
        <taxon>Fungi</taxon>
        <taxon>Dikarya</taxon>
        <taxon>Basidiomycota</taxon>
        <taxon>Agaricomycotina</taxon>
        <taxon>Tremellomycetes</taxon>
        <taxon>Tremellales</taxon>
        <taxon>Cryptococcaceae</taxon>
        <taxon>Cryptococcus</taxon>
        <taxon>Cryptococcus neoformans species complex</taxon>
    </lineage>
</organism>
<evidence type="ECO:0000250" key="1"/>
<evidence type="ECO:0000255" key="2"/>
<evidence type="ECO:0000255" key="3">
    <source>
        <dbReference type="PROSITE-ProRule" id="PRU01150"/>
    </source>
</evidence>
<evidence type="ECO:0000256" key="4">
    <source>
        <dbReference type="SAM" id="MobiDB-lite"/>
    </source>
</evidence>
<evidence type="ECO:0000305" key="5"/>
<dbReference type="EMBL" id="AAEY01000028">
    <property type="protein sequence ID" value="EAL20510.1"/>
    <property type="status" value="ALT_SEQ"/>
    <property type="molecule type" value="Genomic_DNA"/>
</dbReference>
<dbReference type="RefSeq" id="XP_775157.1">
    <property type="nucleotide sequence ID" value="XM_770064.1"/>
</dbReference>
<dbReference type="SMR" id="P0CM69"/>
<dbReference type="GeneID" id="4936441"/>
<dbReference type="KEGG" id="cnb:CNBE4300"/>
<dbReference type="HOGENOM" id="CLU_054990_1_3_1"/>
<dbReference type="OrthoDB" id="9296at5206"/>
<dbReference type="GO" id="GO:0005743">
    <property type="term" value="C:mitochondrial inner membrane"/>
    <property type="evidence" value="ECO:0007669"/>
    <property type="project" value="UniProtKB-SubCell"/>
</dbReference>
<dbReference type="GO" id="GO:0005758">
    <property type="term" value="C:mitochondrial intermembrane space"/>
    <property type="evidence" value="ECO:0007669"/>
    <property type="project" value="TreeGrafter"/>
</dbReference>
<dbReference type="GO" id="GO:0015035">
    <property type="term" value="F:protein-disulfide reductase activity"/>
    <property type="evidence" value="ECO:0007669"/>
    <property type="project" value="InterPro"/>
</dbReference>
<dbReference type="GO" id="GO:0045041">
    <property type="term" value="P:protein import into mitochondrial intermembrane space"/>
    <property type="evidence" value="ECO:0007669"/>
    <property type="project" value="InterPro"/>
</dbReference>
<dbReference type="Gene3D" id="1.10.287.2900">
    <property type="match status" value="1"/>
</dbReference>
<dbReference type="InterPro" id="IPR010625">
    <property type="entry name" value="CHCH"/>
</dbReference>
<dbReference type="InterPro" id="IPR039289">
    <property type="entry name" value="CHCHD4"/>
</dbReference>
<dbReference type="PANTHER" id="PTHR21622">
    <property type="entry name" value="COILED-COIL-HELIX-COILED-COIL-HELIX DOMAIN CONTAINING 4"/>
    <property type="match status" value="1"/>
</dbReference>
<dbReference type="PANTHER" id="PTHR21622:SF0">
    <property type="entry name" value="COILED-COIL-HELIX-COILED-COIL-HELIX DOMAIN CONTAINING 4"/>
    <property type="match status" value="1"/>
</dbReference>
<dbReference type="Pfam" id="PF06747">
    <property type="entry name" value="CHCH"/>
    <property type="match status" value="1"/>
</dbReference>
<dbReference type="PROSITE" id="PS51808">
    <property type="entry name" value="CHCH"/>
    <property type="match status" value="1"/>
</dbReference>